<organism>
    <name type="scientific">Mycobacterium tuberculosis (strain CDC 1551 / Oshkosh)</name>
    <dbReference type="NCBI Taxonomy" id="83331"/>
    <lineage>
        <taxon>Bacteria</taxon>
        <taxon>Bacillati</taxon>
        <taxon>Actinomycetota</taxon>
        <taxon>Actinomycetes</taxon>
        <taxon>Mycobacteriales</taxon>
        <taxon>Mycobacteriaceae</taxon>
        <taxon>Mycobacterium</taxon>
        <taxon>Mycobacterium tuberculosis complex</taxon>
    </lineage>
</organism>
<sequence>MTYTGSIRCEGDTWDLASSVGATATMVAAARAMATRAANPLINDQFAEPLVRAVGVDVLTRLASGELTASDIDDPERPNASMVRMAEHHAVRTKFFDEFFMDATRAGIRQVVILASGLDSRAYRLAWPAQTVVYEIDQPQVMEFKTRTLAELGATPTADRRVVTADLRADWPTALGAAGFDPTQPTAWSAEGLLRYLPPEAQDRLLDNVTALSVPDSRFATESIRNFKPHHEERMRERMTILANRWRAYGFDLDMNELVYFGDRNEPASYLSDNGWLLTEIKSQDLLTANGFQPFEDEEVPLPDFFYVSARLQRKHRQYPAHRKPAPSWRHTACPVNELSKSAAYTMTRSDAHQASTTAPPPPGLTG</sequence>
<protein>
    <recommendedName>
        <fullName>Putative S-adenosyl-L-methionine-dependent methyltransferase MT0751</fullName>
        <ecNumber>2.1.1.-</ecNumber>
    </recommendedName>
</protein>
<proteinExistence type="inferred from homology"/>
<gene>
    <name type="ordered locus">MT0751</name>
</gene>
<name>Y751_MYCTO</name>
<reference key="1">
    <citation type="journal article" date="2002" name="J. Bacteriol.">
        <title>Whole-genome comparison of Mycobacterium tuberculosis clinical and laboratory strains.</title>
        <authorList>
            <person name="Fleischmann R.D."/>
            <person name="Alland D."/>
            <person name="Eisen J.A."/>
            <person name="Carpenter L."/>
            <person name="White O."/>
            <person name="Peterson J.D."/>
            <person name="DeBoy R.T."/>
            <person name="Dodson R.J."/>
            <person name="Gwinn M.L."/>
            <person name="Haft D.H."/>
            <person name="Hickey E.K."/>
            <person name="Kolonay J.F."/>
            <person name="Nelson W.C."/>
            <person name="Umayam L.A."/>
            <person name="Ermolaeva M.D."/>
            <person name="Salzberg S.L."/>
            <person name="Delcher A."/>
            <person name="Utterback T.R."/>
            <person name="Weidman J.F."/>
            <person name="Khouri H.M."/>
            <person name="Gill J."/>
            <person name="Mikula A."/>
            <person name="Bishai W."/>
            <person name="Jacobs W.R. Jr."/>
            <person name="Venter J.C."/>
            <person name="Fraser C.M."/>
        </authorList>
    </citation>
    <scope>NUCLEOTIDE SEQUENCE [LARGE SCALE GENOMIC DNA]</scope>
    <source>
        <strain>CDC 1551 / Oshkosh</strain>
    </source>
</reference>
<evidence type="ECO:0000250" key="1"/>
<evidence type="ECO:0000256" key="2">
    <source>
        <dbReference type="SAM" id="MobiDB-lite"/>
    </source>
</evidence>
<evidence type="ECO:0000305" key="3"/>
<accession>P9WFI6</accession>
<accession>L0T4P3</accession>
<accession>P95074</accession>
<accession>Q7D9E1</accession>
<keyword id="KW-0489">Methyltransferase</keyword>
<keyword id="KW-1185">Reference proteome</keyword>
<keyword id="KW-0949">S-adenosyl-L-methionine</keyword>
<keyword id="KW-0808">Transferase</keyword>
<comment type="function">
    <text evidence="1">Exhibits S-adenosyl-L-methionine-dependent methyltransferase activity.</text>
</comment>
<comment type="similarity">
    <text evidence="3">Belongs to the UPF0677 family.</text>
</comment>
<dbReference type="EC" id="2.1.1.-"/>
<dbReference type="EMBL" id="AE000516">
    <property type="protein sequence ID" value="AAK44984.1"/>
    <property type="molecule type" value="Genomic_DNA"/>
</dbReference>
<dbReference type="PIR" id="A70645">
    <property type="entry name" value="A70645"/>
</dbReference>
<dbReference type="RefSeq" id="WP_003403691.1">
    <property type="nucleotide sequence ID" value="NZ_KK341227.1"/>
</dbReference>
<dbReference type="SMR" id="P9WFI6"/>
<dbReference type="KEGG" id="mtc:MT0751"/>
<dbReference type="PATRIC" id="fig|83331.31.peg.804"/>
<dbReference type="HOGENOM" id="CLU_056160_2_1_11"/>
<dbReference type="Proteomes" id="UP000001020">
    <property type="component" value="Chromosome"/>
</dbReference>
<dbReference type="GO" id="GO:0008168">
    <property type="term" value="F:methyltransferase activity"/>
    <property type="evidence" value="ECO:0007669"/>
    <property type="project" value="UniProtKB-KW"/>
</dbReference>
<dbReference type="GO" id="GO:0032259">
    <property type="term" value="P:methylation"/>
    <property type="evidence" value="ECO:0007669"/>
    <property type="project" value="UniProtKB-KW"/>
</dbReference>
<dbReference type="FunFam" id="3.40.50.150:FF:000152">
    <property type="entry name" value="S-adenosyl-L-methionine-dependent methyltransferase"/>
    <property type="match status" value="1"/>
</dbReference>
<dbReference type="Gene3D" id="3.40.50.150">
    <property type="entry name" value="Vaccinia Virus protein VP39"/>
    <property type="match status" value="1"/>
</dbReference>
<dbReference type="InterPro" id="IPR007213">
    <property type="entry name" value="Ppm1/Ppm2/Tcmp"/>
</dbReference>
<dbReference type="InterPro" id="IPR029063">
    <property type="entry name" value="SAM-dependent_MTases_sf"/>
</dbReference>
<dbReference type="InterPro" id="IPR011610">
    <property type="entry name" value="SAM_mthyl_Trfase_ML2640-like"/>
</dbReference>
<dbReference type="NCBIfam" id="TIGR00027">
    <property type="entry name" value="mthyl_TIGR00027"/>
    <property type="match status" value="1"/>
</dbReference>
<dbReference type="PANTHER" id="PTHR43619">
    <property type="entry name" value="S-ADENOSYL-L-METHIONINE-DEPENDENT METHYLTRANSFERASE YKTD-RELATED"/>
    <property type="match status" value="1"/>
</dbReference>
<dbReference type="PANTHER" id="PTHR43619:SF2">
    <property type="entry name" value="S-ADENOSYL-L-METHIONINE-DEPENDENT METHYLTRANSFERASES SUPERFAMILY PROTEIN"/>
    <property type="match status" value="1"/>
</dbReference>
<dbReference type="Pfam" id="PF04072">
    <property type="entry name" value="LCM"/>
    <property type="match status" value="1"/>
</dbReference>
<dbReference type="SUPFAM" id="SSF53335">
    <property type="entry name" value="S-adenosyl-L-methionine-dependent methyltransferases"/>
    <property type="match status" value="1"/>
</dbReference>
<feature type="chain" id="PRO_0000428532" description="Putative S-adenosyl-L-methionine-dependent methyltransferase MT0751">
    <location>
        <begin position="1"/>
        <end position="367"/>
    </location>
</feature>
<feature type="region of interest" description="Disordered" evidence="2">
    <location>
        <begin position="348"/>
        <end position="367"/>
    </location>
</feature>
<feature type="compositionally biased region" description="Polar residues" evidence="2">
    <location>
        <begin position="348"/>
        <end position="358"/>
    </location>
</feature>
<feature type="binding site" evidence="1">
    <location>
        <position position="137"/>
    </location>
    <ligand>
        <name>S-adenosyl-L-methionine</name>
        <dbReference type="ChEBI" id="CHEBI:59789"/>
    </ligand>
</feature>
<feature type="binding site" evidence="1">
    <location>
        <begin position="166"/>
        <end position="167"/>
    </location>
    <ligand>
        <name>S-adenosyl-L-methionine</name>
        <dbReference type="ChEBI" id="CHEBI:59789"/>
    </ligand>
</feature>